<reference key="1">
    <citation type="submission" date="2005-08" db="EMBL/GenBank/DDBJ databases">
        <title>Complete sequence of Synechococcus sp. CC9902.</title>
        <authorList>
            <person name="Copeland A."/>
            <person name="Lucas S."/>
            <person name="Lapidus A."/>
            <person name="Barry K."/>
            <person name="Detter J.C."/>
            <person name="Glavina T."/>
            <person name="Hammon N."/>
            <person name="Israni S."/>
            <person name="Pitluck S."/>
            <person name="Martinez M."/>
            <person name="Schmutz J."/>
            <person name="Larimer F."/>
            <person name="Land M."/>
            <person name="Kyrpides N."/>
            <person name="Ivanova N."/>
            <person name="Richardson P."/>
        </authorList>
    </citation>
    <scope>NUCLEOTIDE SEQUENCE [LARGE SCALE GENOMIC DNA]</scope>
    <source>
        <strain>CC9902</strain>
    </source>
</reference>
<feature type="chain" id="PRO_0000353536" description="DNA-directed RNA polymerase subunit beta'">
    <location>
        <begin position="1"/>
        <end position="1364"/>
    </location>
</feature>
<feature type="region of interest" description="Disordered" evidence="2">
    <location>
        <begin position="1318"/>
        <end position="1342"/>
    </location>
</feature>
<feature type="binding site" evidence="1">
    <location>
        <position position="250"/>
    </location>
    <ligand>
        <name>Zn(2+)</name>
        <dbReference type="ChEBI" id="CHEBI:29105"/>
    </ligand>
</feature>
<feature type="binding site" evidence="1">
    <location>
        <position position="317"/>
    </location>
    <ligand>
        <name>Zn(2+)</name>
        <dbReference type="ChEBI" id="CHEBI:29105"/>
    </ligand>
</feature>
<feature type="binding site" evidence="1">
    <location>
        <position position="324"/>
    </location>
    <ligand>
        <name>Zn(2+)</name>
        <dbReference type="ChEBI" id="CHEBI:29105"/>
    </ligand>
</feature>
<feature type="binding site" evidence="1">
    <location>
        <position position="327"/>
    </location>
    <ligand>
        <name>Zn(2+)</name>
        <dbReference type="ChEBI" id="CHEBI:29105"/>
    </ligand>
</feature>
<comment type="function">
    <text evidence="1">DNA-dependent RNA polymerase catalyzes the transcription of DNA into RNA using the four ribonucleoside triphosphates as substrates.</text>
</comment>
<comment type="catalytic activity">
    <reaction evidence="1">
        <text>RNA(n) + a ribonucleoside 5'-triphosphate = RNA(n+1) + diphosphate</text>
        <dbReference type="Rhea" id="RHEA:21248"/>
        <dbReference type="Rhea" id="RHEA-COMP:14527"/>
        <dbReference type="Rhea" id="RHEA-COMP:17342"/>
        <dbReference type="ChEBI" id="CHEBI:33019"/>
        <dbReference type="ChEBI" id="CHEBI:61557"/>
        <dbReference type="ChEBI" id="CHEBI:140395"/>
        <dbReference type="EC" id="2.7.7.6"/>
    </reaction>
</comment>
<comment type="cofactor">
    <cofactor evidence="1">
        <name>Zn(2+)</name>
        <dbReference type="ChEBI" id="CHEBI:29105"/>
    </cofactor>
    <text evidence="1">Binds 1 Zn(2+) ion per subunit.</text>
</comment>
<comment type="subunit">
    <text evidence="1">In cyanobacteria the RNAP catalytic core is composed of 2 alpha, 1 beta, 1 beta', 1 gamma and 1 omega subunit. When a sigma factor is associated with the core the holoenzyme is formed, which can initiate transcription.</text>
</comment>
<comment type="similarity">
    <text evidence="1">Belongs to the RNA polymerase beta' chain family. RpoC2 subfamily.</text>
</comment>
<evidence type="ECO:0000255" key="1">
    <source>
        <dbReference type="HAMAP-Rule" id="MF_01324"/>
    </source>
</evidence>
<evidence type="ECO:0000256" key="2">
    <source>
        <dbReference type="SAM" id="MobiDB-lite"/>
    </source>
</evidence>
<dbReference type="EC" id="2.7.7.6" evidence="1"/>
<dbReference type="EMBL" id="CP000097">
    <property type="protein sequence ID" value="ABB25575.1"/>
    <property type="molecule type" value="Genomic_DNA"/>
</dbReference>
<dbReference type="RefSeq" id="WP_011359420.1">
    <property type="nucleotide sequence ID" value="NC_007513.1"/>
</dbReference>
<dbReference type="SMR" id="Q3AZA2"/>
<dbReference type="STRING" id="316279.Syncc9902_0607"/>
<dbReference type="KEGG" id="sye:Syncc9902_0607"/>
<dbReference type="eggNOG" id="COG0086">
    <property type="taxonomic scope" value="Bacteria"/>
</dbReference>
<dbReference type="HOGENOM" id="CLU_000524_1_0_3"/>
<dbReference type="OrthoDB" id="9815296at2"/>
<dbReference type="Proteomes" id="UP000002712">
    <property type="component" value="Chromosome"/>
</dbReference>
<dbReference type="GO" id="GO:0000428">
    <property type="term" value="C:DNA-directed RNA polymerase complex"/>
    <property type="evidence" value="ECO:0007669"/>
    <property type="project" value="UniProtKB-KW"/>
</dbReference>
<dbReference type="GO" id="GO:0003677">
    <property type="term" value="F:DNA binding"/>
    <property type="evidence" value="ECO:0007669"/>
    <property type="project" value="UniProtKB-UniRule"/>
</dbReference>
<dbReference type="GO" id="GO:0003899">
    <property type="term" value="F:DNA-directed RNA polymerase activity"/>
    <property type="evidence" value="ECO:0007669"/>
    <property type="project" value="UniProtKB-UniRule"/>
</dbReference>
<dbReference type="GO" id="GO:0008270">
    <property type="term" value="F:zinc ion binding"/>
    <property type="evidence" value="ECO:0007669"/>
    <property type="project" value="UniProtKB-UniRule"/>
</dbReference>
<dbReference type="GO" id="GO:0006351">
    <property type="term" value="P:DNA-templated transcription"/>
    <property type="evidence" value="ECO:0007669"/>
    <property type="project" value="UniProtKB-UniRule"/>
</dbReference>
<dbReference type="CDD" id="cd02655">
    <property type="entry name" value="RNAP_beta'_C"/>
    <property type="match status" value="1"/>
</dbReference>
<dbReference type="FunFam" id="1.10.150.390:FF:000002">
    <property type="entry name" value="DNA-directed RNA polymerase subunit beta"/>
    <property type="match status" value="1"/>
</dbReference>
<dbReference type="Gene3D" id="1.10.132.30">
    <property type="match status" value="1"/>
</dbReference>
<dbReference type="Gene3D" id="1.10.150.390">
    <property type="match status" value="1"/>
</dbReference>
<dbReference type="Gene3D" id="1.10.1790.20">
    <property type="match status" value="1"/>
</dbReference>
<dbReference type="Gene3D" id="2.40.50.100">
    <property type="match status" value="1"/>
</dbReference>
<dbReference type="Gene3D" id="1.10.274.100">
    <property type="entry name" value="RNA polymerase Rpb1, domain 3"/>
    <property type="match status" value="1"/>
</dbReference>
<dbReference type="HAMAP" id="MF_01324">
    <property type="entry name" value="RNApol_bact_RpoC2"/>
    <property type="match status" value="1"/>
</dbReference>
<dbReference type="InterPro" id="IPR012756">
    <property type="entry name" value="DNA-dir_RpoC2_beta_pp"/>
</dbReference>
<dbReference type="InterPro" id="IPR045867">
    <property type="entry name" value="DNA-dir_RpoC_beta_prime"/>
</dbReference>
<dbReference type="InterPro" id="IPR007066">
    <property type="entry name" value="RNA_pol_Rpb1_3"/>
</dbReference>
<dbReference type="InterPro" id="IPR042102">
    <property type="entry name" value="RNA_pol_Rpb1_3_sf"/>
</dbReference>
<dbReference type="InterPro" id="IPR007083">
    <property type="entry name" value="RNA_pol_Rpb1_4"/>
</dbReference>
<dbReference type="InterPro" id="IPR007081">
    <property type="entry name" value="RNA_pol_Rpb1_5"/>
</dbReference>
<dbReference type="InterPro" id="IPR038120">
    <property type="entry name" value="Rpb1_funnel_sf"/>
</dbReference>
<dbReference type="NCBIfam" id="NF002724">
    <property type="entry name" value="PRK02597.1"/>
    <property type="match status" value="1"/>
</dbReference>
<dbReference type="NCBIfam" id="TIGR02388">
    <property type="entry name" value="rpoC2_cyan"/>
    <property type="match status" value="1"/>
</dbReference>
<dbReference type="PANTHER" id="PTHR19376">
    <property type="entry name" value="DNA-DIRECTED RNA POLYMERASE"/>
    <property type="match status" value="1"/>
</dbReference>
<dbReference type="Pfam" id="PF04983">
    <property type="entry name" value="RNA_pol_Rpb1_3"/>
    <property type="match status" value="1"/>
</dbReference>
<dbReference type="Pfam" id="PF05000">
    <property type="entry name" value="RNA_pol_Rpb1_4"/>
    <property type="match status" value="1"/>
</dbReference>
<dbReference type="Pfam" id="PF04998">
    <property type="entry name" value="RNA_pol_Rpb1_5"/>
    <property type="match status" value="2"/>
</dbReference>
<dbReference type="SUPFAM" id="SSF64484">
    <property type="entry name" value="beta and beta-prime subunits of DNA dependent RNA-polymerase"/>
    <property type="match status" value="1"/>
</dbReference>
<protein>
    <recommendedName>
        <fullName evidence="1">DNA-directed RNA polymerase subunit beta'</fullName>
        <shortName evidence="1">RNAP subunit beta'</shortName>
        <ecNumber evidence="1">2.7.7.6</ecNumber>
    </recommendedName>
    <alternativeName>
        <fullName evidence="1">RNA polymerase subunit beta'</fullName>
    </alternativeName>
    <alternativeName>
        <fullName evidence="1">Transcriptase subunit beta'</fullName>
    </alternativeName>
</protein>
<accession>Q3AZA2</accession>
<organism>
    <name type="scientific">Synechococcus sp. (strain CC9902)</name>
    <dbReference type="NCBI Taxonomy" id="316279"/>
    <lineage>
        <taxon>Bacteria</taxon>
        <taxon>Bacillati</taxon>
        <taxon>Cyanobacteriota</taxon>
        <taxon>Cyanophyceae</taxon>
        <taxon>Synechococcales</taxon>
        <taxon>Synechococcaceae</taxon>
        <taxon>Synechococcus</taxon>
    </lineage>
</organism>
<name>RPOC2_SYNS9</name>
<proteinExistence type="inferred from homology"/>
<sequence>MTTSKPRKPSKAKAAKAAKAAKAALEKISKPLSKTPPPFRNHIIDKKALKNLVAWSFKHHGTAVTSSMADDLKDLGFKYATQAAVSISVDDLKVPAAKKDLLGQAEEQITATEERYRLGEITEVERHTKVIDTWTETNERLVDAVKKNFDENAPLNSVWMMANSGARGNMSQVRQLVGMRGLMANPQGEIIDLPIRTNFREGLTVTEYVISSYGARKGLVDTALRTADSGYLTRRLVDVAQDVIVREDDCGTMRHIVVEAEDSKFAKRLVGRLTAAQVVSAEGEVLAERDTEIDPALSSKIEKAGITAVSIRSPLTCEANRSVCRKCYGWALAHNELVDLGEAVGIIAAQSIGEPGTQLTMRTFHTGGVSTAESGVVRSKVAGDVEFGSKARVRPYRTPHGVEAQQAEVDFTLTIKPSGKGRPQKIDITLGSLLFVDNGQAIESDVTVVQIAAGAVQKSVEKATKDVICDLAGQVHYEDKIQPREVTDRQGNITLKAQRLGRMWVLAGDVYNLPPNALPVVDGKSTVTEGQVLAEASQRSEFGGDVRLRDSIGDSREVQIVTTAMTLKDFKLLEESNHSGELWNLEAKDGTRYRLNTIPGSKIGNGEVIAELADDRFRTGTGGLVKFAPGLAIKKARSAKNGYEVNKGGTLLWVPQETHEINKDISLLMITDGQWIEAGTEVVKDIFSQTAGVVTVTQKNDILREIIVRGGDLRLISDNKALERFEGDGQMVNPGDDVAKGVSVDTMKFVQTVETPEGKGLLLRPVEEYTIPNEAQLPELSHLKQANGPHLGIKATQRLAFKDNELIKSVEGVELLKTQLLLETFDTTPQMTVDVERAPDKRAKTISRLRLVILESILVRRDTMSDSSHGSTHTDLQVEDGISVKAGDVVATTQILCKQEGVVQLPEATEAEPVRRLIVERPEDTTTISTSGKPSVAVGDRVVDGDLLASGQPSDCCGEVEAVDGSSVTLRLGRPYMVSPDSLLHVRDGDLVQRGDGLALLVFERQKTGDIVQGLPRIEELLEARRPRDSAILCRKPGTVEIKQGEDDDSLSVNVIESDDAIGEYPILLGRNVMVNDGQQVTAGELLTDGPINPHELLECFFEDFRSRKPLMDAAQEAIANLQHRLVTEVQNVYKSQGVSIDDKHIEVIVRQMTSKVRVEDAGDTTLLPGELIELRQVEDTNQAMAITGGAPSEFTPVLLGITKASLNTDSFISAASFQETTRVLTEAAIEGKSDWLRGLKENVIIGRLIPAGTGFSGFEEELQKEAGPHPDILSEDPAGYRRMQNLRPDYTVDMPPAASSSALLADPSDADLEATRTRHNIDPSASTNAAFTRPDVDNELKEEQVVDAEAVEGLQEEGLLSDD</sequence>
<gene>
    <name evidence="1" type="primary">rpoC2</name>
    <name type="ordered locus">Syncc9902_0607</name>
</gene>
<keyword id="KW-0240">DNA-directed RNA polymerase</keyword>
<keyword id="KW-0479">Metal-binding</keyword>
<keyword id="KW-0548">Nucleotidyltransferase</keyword>
<keyword id="KW-1185">Reference proteome</keyword>
<keyword id="KW-0804">Transcription</keyword>
<keyword id="KW-0808">Transferase</keyword>
<keyword id="KW-0862">Zinc</keyword>